<feature type="signal peptide" evidence="3">
    <location>
        <begin position="1"/>
        <end position="19"/>
    </location>
</feature>
<feature type="peptide" id="PRO_0000020501" description="Oxytocin">
    <location>
        <begin position="20"/>
        <end position="28"/>
    </location>
</feature>
<feature type="chain" id="PRO_0000020502" description="Neurophysin 1">
    <location>
        <begin position="32"/>
        <end position="125"/>
    </location>
</feature>
<feature type="modified residue" description="Glycine amide" evidence="3">
    <location>
        <position position="28"/>
    </location>
</feature>
<feature type="disulfide bond">
    <location>
        <begin position="20"/>
        <end position="25"/>
    </location>
</feature>
<feature type="disulfide bond" evidence="1">
    <location>
        <begin position="41"/>
        <end position="85"/>
    </location>
</feature>
<feature type="disulfide bond" evidence="1">
    <location>
        <begin position="44"/>
        <end position="58"/>
    </location>
</feature>
<feature type="disulfide bond" evidence="1">
    <location>
        <begin position="52"/>
        <end position="75"/>
    </location>
</feature>
<feature type="disulfide bond" evidence="1">
    <location>
        <begin position="59"/>
        <end position="65"/>
    </location>
</feature>
<feature type="disulfide bond" evidence="1">
    <location>
        <begin position="92"/>
        <end position="104"/>
    </location>
</feature>
<feature type="disulfide bond" evidence="1">
    <location>
        <begin position="98"/>
        <end position="116"/>
    </location>
</feature>
<feature type="disulfide bond" evidence="1">
    <location>
        <begin position="105"/>
        <end position="110"/>
    </location>
</feature>
<gene>
    <name type="primary">OXT</name>
</gene>
<sequence length="125" mass="12887">MAGPSLACCLLGLLALTSACYIQNCPLGGKRAVLDLDVRKCLPCGPGGKGRCFGPSICCGDELGCFVGTAEALRCQEENYLPSPCQSGQKPCGSEGRCAAAGICCNPDGCRFDPACDPEATFSQR</sequence>
<name>NEU1_PIG</name>
<protein>
    <recommendedName>
        <fullName>Oxytocin-neurophysin 1</fullName>
        <shortName>OT-NPI</shortName>
    </recommendedName>
    <component>
        <recommendedName>
            <fullName>Oxytocin</fullName>
        </recommendedName>
        <alternativeName>
            <fullName>Ocytocin</fullName>
        </alternativeName>
    </component>
    <component>
        <recommendedName>
            <fullName>Neurophysin 1</fullName>
        </recommendedName>
    </component>
</protein>
<comment type="function">
    <text>Neurophysin 1 specifically binds oxytocin.</text>
</comment>
<comment type="function">
    <text evidence="2">Oxytocin causes contraction of the smooth muscle of the uterus and of the mammary gland. Acts by binding to oxytocin receptor (OXTR) (By similarity).</text>
</comment>
<comment type="subunit">
    <text evidence="2">Interacts with oxytocin receptor (Ki=1.5 nM) (By similarity). Interacts with vasopressin V1aR/AVPR1A (Ki=37 nM), V1bR/AVPR1B (Ki=222 nM), and V2R/AVPR2 receptors (Ki=823 nM) (By similarity).</text>
</comment>
<comment type="similarity">
    <text evidence="4">Belongs to the vasopressin/oxytocin family.</text>
</comment>
<accession>P01177</accession>
<proteinExistence type="evidence at protein level"/>
<organism>
    <name type="scientific">Sus scrofa</name>
    <name type="common">Pig</name>
    <dbReference type="NCBI Taxonomy" id="9823"/>
    <lineage>
        <taxon>Eukaryota</taxon>
        <taxon>Metazoa</taxon>
        <taxon>Chordata</taxon>
        <taxon>Craniata</taxon>
        <taxon>Vertebrata</taxon>
        <taxon>Euteleostomi</taxon>
        <taxon>Mammalia</taxon>
        <taxon>Eutheria</taxon>
        <taxon>Laurasiatheria</taxon>
        <taxon>Artiodactyla</taxon>
        <taxon>Suina</taxon>
        <taxon>Suidae</taxon>
        <taxon>Sus</taxon>
    </lineage>
</organism>
<dbReference type="PIR" id="B60970">
    <property type="entry name" value="NFPG1"/>
</dbReference>
<dbReference type="RefSeq" id="NP_001161061.1">
    <property type="nucleotide sequence ID" value="NM_001167589.1"/>
</dbReference>
<dbReference type="SMR" id="P01177"/>
<dbReference type="FunCoup" id="P01177">
    <property type="interactions" value="184"/>
</dbReference>
<dbReference type="STRING" id="9823.ENSSSCP00000007626"/>
<dbReference type="PaxDb" id="9823-ENSSSCP00000007626"/>
<dbReference type="Ensembl" id="ENSSSCT00000007837.5">
    <property type="protein sequence ID" value="ENSSSCP00000007626.2"/>
    <property type="gene ID" value="ENSSSCG00000007164.5"/>
</dbReference>
<dbReference type="Ensembl" id="ENSSSCT00015081984.1">
    <property type="protein sequence ID" value="ENSSSCP00015033170.1"/>
    <property type="gene ID" value="ENSSSCG00015061398.1"/>
</dbReference>
<dbReference type="Ensembl" id="ENSSSCT00025060419.1">
    <property type="protein sequence ID" value="ENSSSCP00025025625.1"/>
    <property type="gene ID" value="ENSSSCG00025044498.1"/>
</dbReference>
<dbReference type="Ensembl" id="ENSSSCT00035057212.1">
    <property type="protein sequence ID" value="ENSSSCP00035022995.1"/>
    <property type="gene ID" value="ENSSSCG00035043065.1"/>
</dbReference>
<dbReference type="Ensembl" id="ENSSSCT00045003680.1">
    <property type="protein sequence ID" value="ENSSSCP00045002331.1"/>
    <property type="gene ID" value="ENSSSCG00045002354.1"/>
</dbReference>
<dbReference type="Ensembl" id="ENSSSCT00050079009.1">
    <property type="protein sequence ID" value="ENSSSCP00050033996.1"/>
    <property type="gene ID" value="ENSSSCG00050057938.1"/>
</dbReference>
<dbReference type="Ensembl" id="ENSSSCT00060013656.1">
    <property type="protein sequence ID" value="ENSSSCP00060005234.1"/>
    <property type="gene ID" value="ENSSSCG00060010502.1"/>
</dbReference>
<dbReference type="Ensembl" id="ENSSSCT00065088251.1">
    <property type="protein sequence ID" value="ENSSSCP00065038604.1"/>
    <property type="gene ID" value="ENSSSCG00065064290.1"/>
</dbReference>
<dbReference type="Ensembl" id="ENSSSCT00070000302.1">
    <property type="protein sequence ID" value="ENSSSCP00070000249.1"/>
    <property type="gene ID" value="ENSSSCG00070000178.1"/>
</dbReference>
<dbReference type="Ensembl" id="ENSSSCT00090014558">
    <property type="protein sequence ID" value="ENSSSCP00090009278"/>
    <property type="gene ID" value="ENSSSCG00090008163"/>
</dbReference>
<dbReference type="Ensembl" id="ENSSSCT00105053040">
    <property type="protein sequence ID" value="ENSSSCP00105037304"/>
    <property type="gene ID" value="ENSSSCG00105027931"/>
</dbReference>
<dbReference type="Ensembl" id="ENSSSCT00115014841">
    <property type="protein sequence ID" value="ENSSSCP00115014027"/>
    <property type="gene ID" value="ENSSSCG00115008503"/>
</dbReference>
<dbReference type="Ensembl" id="ENSSSCT00130042553">
    <property type="protein sequence ID" value="ENSSSCP00130030075"/>
    <property type="gene ID" value="ENSSSCG00130021950"/>
</dbReference>
<dbReference type="GeneID" id="100152272"/>
<dbReference type="KEGG" id="ssc:100152272"/>
<dbReference type="CTD" id="5020"/>
<dbReference type="VGNC" id="VGNC:96466">
    <property type="gene designation" value="OXT"/>
</dbReference>
<dbReference type="eggNOG" id="ENOG502S2CT">
    <property type="taxonomic scope" value="Eukaryota"/>
</dbReference>
<dbReference type="GeneTree" id="ENSGT00390000004511"/>
<dbReference type="HOGENOM" id="CLU_125770_1_0_1"/>
<dbReference type="InParanoid" id="P01177"/>
<dbReference type="OMA" id="ACVINDP"/>
<dbReference type="OrthoDB" id="10056056at2759"/>
<dbReference type="TreeFam" id="TF333018"/>
<dbReference type="Reactome" id="R-SSC-388479">
    <property type="pathway name" value="Vasopressin-like receptors"/>
</dbReference>
<dbReference type="Reactome" id="R-SSC-416476">
    <property type="pathway name" value="G alpha (q) signalling events"/>
</dbReference>
<dbReference type="Proteomes" id="UP000008227">
    <property type="component" value="Chromosome 17"/>
</dbReference>
<dbReference type="Proteomes" id="UP000314985">
    <property type="component" value="Chromosome 17"/>
</dbReference>
<dbReference type="Proteomes" id="UP000694570">
    <property type="component" value="Unplaced"/>
</dbReference>
<dbReference type="Proteomes" id="UP000694571">
    <property type="component" value="Unplaced"/>
</dbReference>
<dbReference type="Proteomes" id="UP000694720">
    <property type="component" value="Unplaced"/>
</dbReference>
<dbReference type="Proteomes" id="UP000694722">
    <property type="component" value="Unplaced"/>
</dbReference>
<dbReference type="Proteomes" id="UP000694723">
    <property type="component" value="Unplaced"/>
</dbReference>
<dbReference type="Proteomes" id="UP000694724">
    <property type="component" value="Unplaced"/>
</dbReference>
<dbReference type="Proteomes" id="UP000694725">
    <property type="component" value="Unplaced"/>
</dbReference>
<dbReference type="Proteomes" id="UP000694726">
    <property type="component" value="Unplaced"/>
</dbReference>
<dbReference type="Proteomes" id="UP000694727">
    <property type="component" value="Unplaced"/>
</dbReference>
<dbReference type="Proteomes" id="UP000694728">
    <property type="component" value="Unplaced"/>
</dbReference>
<dbReference type="Bgee" id="ENSSSCG00000007164">
    <property type="expression patterns" value="Expressed in hypothalamus and 9 other cell types or tissues"/>
</dbReference>
<dbReference type="GO" id="GO:0005615">
    <property type="term" value="C:extracellular space"/>
    <property type="evidence" value="ECO:0000250"/>
    <property type="project" value="AgBase"/>
</dbReference>
<dbReference type="GO" id="GO:0030141">
    <property type="term" value="C:secretory granule"/>
    <property type="evidence" value="ECO:0000318"/>
    <property type="project" value="GO_Central"/>
</dbReference>
<dbReference type="GO" id="GO:0005185">
    <property type="term" value="F:neurohypophyseal hormone activity"/>
    <property type="evidence" value="ECO:0007669"/>
    <property type="project" value="InterPro"/>
</dbReference>
<dbReference type="GO" id="GO:0005184">
    <property type="term" value="F:neuropeptide hormone activity"/>
    <property type="evidence" value="ECO:0000318"/>
    <property type="project" value="GO_Central"/>
</dbReference>
<dbReference type="GO" id="GO:0031855">
    <property type="term" value="F:oxytocin receptor binding"/>
    <property type="evidence" value="ECO:0000318"/>
    <property type="project" value="GO_Central"/>
</dbReference>
<dbReference type="GO" id="GO:0031894">
    <property type="term" value="F:V1A vasopressin receptor binding"/>
    <property type="evidence" value="ECO:0000318"/>
    <property type="project" value="GO_Central"/>
</dbReference>
<dbReference type="GO" id="GO:0043207">
    <property type="term" value="P:response to external biotic stimulus"/>
    <property type="evidence" value="ECO:0000250"/>
    <property type="project" value="AgBase"/>
</dbReference>
<dbReference type="GO" id="GO:0032094">
    <property type="term" value="P:response to food"/>
    <property type="evidence" value="ECO:0000250"/>
    <property type="project" value="AgBase"/>
</dbReference>
<dbReference type="GO" id="GO:0009612">
    <property type="term" value="P:response to mechanical stimulus"/>
    <property type="evidence" value="ECO:0000250"/>
    <property type="project" value="AgBase"/>
</dbReference>
<dbReference type="FunFam" id="2.60.9.10:FF:000001">
    <property type="entry name" value="oxytocin-neurophysin 1"/>
    <property type="match status" value="1"/>
</dbReference>
<dbReference type="Gene3D" id="2.60.9.10">
    <property type="entry name" value="Neurohypophysial hormone domain"/>
    <property type="match status" value="1"/>
</dbReference>
<dbReference type="InterPro" id="IPR000981">
    <property type="entry name" value="Neurhyp_horm"/>
</dbReference>
<dbReference type="InterPro" id="IPR036387">
    <property type="entry name" value="Neurhyp_horm_dom_sf"/>
</dbReference>
<dbReference type="InterPro" id="IPR022423">
    <property type="entry name" value="Neurohypophysial_hormone_CS"/>
</dbReference>
<dbReference type="PANTHER" id="PTHR11681">
    <property type="entry name" value="NEUROPHYSIN"/>
    <property type="match status" value="1"/>
</dbReference>
<dbReference type="PANTHER" id="PTHR11681:SF2">
    <property type="entry name" value="OXYTOCIN-NEUROPHYSIN 1"/>
    <property type="match status" value="1"/>
</dbReference>
<dbReference type="Pfam" id="PF00220">
    <property type="entry name" value="Hormone_4"/>
    <property type="match status" value="1"/>
</dbReference>
<dbReference type="Pfam" id="PF00184">
    <property type="entry name" value="Hormone_5"/>
    <property type="match status" value="1"/>
</dbReference>
<dbReference type="PIRSF" id="PIRSF001815">
    <property type="entry name" value="Nonapeptide_hormone_precursor"/>
    <property type="match status" value="1"/>
</dbReference>
<dbReference type="PRINTS" id="PR00831">
    <property type="entry name" value="NEUROPHYSIN"/>
</dbReference>
<dbReference type="SMART" id="SM00003">
    <property type="entry name" value="NH"/>
    <property type="match status" value="1"/>
</dbReference>
<dbReference type="SUPFAM" id="SSF49606">
    <property type="entry name" value="Neurophysin II"/>
    <property type="match status" value="1"/>
</dbReference>
<dbReference type="PROSITE" id="PS00264">
    <property type="entry name" value="NEUROHYPOPHYS_HORM"/>
    <property type="match status" value="1"/>
</dbReference>
<evidence type="ECO:0000250" key="1">
    <source>
        <dbReference type="UniProtKB" id="P01175"/>
    </source>
</evidence>
<evidence type="ECO:0000250" key="2">
    <source>
        <dbReference type="UniProtKB" id="P01178"/>
    </source>
</evidence>
<evidence type="ECO:0000269" key="3">
    <source>
    </source>
</evidence>
<evidence type="ECO:0000305" key="4"/>
<keyword id="KW-0027">Amidation</keyword>
<keyword id="KW-0165">Cleavage on pair of basic residues</keyword>
<keyword id="KW-0903">Direct protein sequencing</keyword>
<keyword id="KW-1015">Disulfide bond</keyword>
<keyword id="KW-0372">Hormone</keyword>
<keyword id="KW-1185">Reference proteome</keyword>
<keyword id="KW-0732">Signal</keyword>
<reference key="1">
    <citation type="journal article" date="1990" name="J. Mol. Endocrinol.">
        <title>Poly(A) tail length of oxytocin- and lysine vasopressin-encoding mRNAs increases during development in the porcine hypothalamus.</title>
        <authorList>
            <person name="Rehbein M."/>
            <person name="Richter D."/>
        </authorList>
    </citation>
    <scope>NUCLEOTIDE SEQUENCE</scope>
</reference>
<reference key="2">
    <citation type="journal article" date="1952" name="J. Biol. Chem.">
        <title>Further distribution studies on the oxytocic hormone of the posterior lobe of the pituitary gland and the preparation of an active crystalline flavianate.</title>
        <authorList>
            <person name="Pierce J.G."/>
            <person name="Gordon S."/>
            <person name="du Vigneaud V."/>
        </authorList>
    </citation>
    <scope>PROTEIN SEQUENCE OF 20-28</scope>
    <scope>AMIDATION AT GLY-28</scope>
</reference>
<reference key="3">
    <citation type="journal article" date="1979" name="FEBS Lett.">
        <title>Comparison between MSEL- and VLDV-neurophysins. Complete amino acid sequences of porcine and bovine VLDV-neurophysins.</title>
        <authorList>
            <person name="Chauvet M.-T."/>
            <person name="Codogno P."/>
            <person name="Chauvet J."/>
            <person name="Acher R."/>
        </authorList>
    </citation>
    <scope>PROTEIN SEQUENCE OF 32-124</scope>
</reference>